<accession>Q1RGE0</accession>
<gene>
    <name evidence="1" type="primary">rapA</name>
    <name type="ordered locus">UTI89_C0064</name>
</gene>
<sequence>MPFTLGQRWISDTESELGLGTVVAVDARTVTLLFPSTGENRLYARSDSPVTRVMFNPGDTITSHDGWQMQVEEVKEENGLLTYIGTRLDTEESGVALREVFLDSKLVFSKPQDRLFAGQIDRMDRFALRYRARKYSSEQFRMPYSGLRGQRTSLIPHQLNIAHDVGRRHAPRVLLADEVGLGKTIEAGMILHQQLLSGAAERVLIIVPETLQHQWLVEMLRRFNLRFALFDDERYAEAQHDAYNPFDTEQLVICSLDFARRSKQRLEHLCEAEWDLLVVDEAHHLVWSEDAPSREYQAIEQLAEHVPGVLLLTATPEQLGMESHFARLRLLDPNRFHDFAQFVEEQKNYRPVADAVAMLLAGNKLSNDELNMLGEMIGEQDIEPLLQAANSDSEDAQSARQELVSMLMDRHGTSRVLFRNTRNGVKGFPKRELHTIKLPLPTQYQTAIKVSGIMGARKSAEDRARDMLYPERIYQEFEGDNATWWNFDPRVEWLMGYLTSHRSQKVLVICAKAATALQLEQVLREREGIRAAVFHEGMSIIERDRAAAWFAEEDTGAQVLLCSEIGSEGRNFQFASHMVMFDLPFNPDLLEQRIGRLDRIGQAHDIQIHVPYLEKTAQSVLVRWYHEGLDAFEHTCPTGRTIYDSVYNDLINYLASPDQTEGFDDLIKNCREQHEALKAQLEQGRDRLLEIHSNGGEKAQALAESIEEQDDDTNLIAFAMNLFDIIGINQDDRGDNMIVLTPSDHMLVPDFPGLSEDGITITFDREVALAREDAQFITWEHPLIRNGLDLILSGDTGSSTISLLKNKALPVGTLLVELIYVVEAQAPKQLQLNRFLPPTPVRMLLDKNGNNLAAQVEFETFNRQLNAVNRHTGSKLVNAVQQDVHAILQLGEAQIEKSARALIDAARNEADEKLSAELSRLEALRAVNPNIRDDELTAIESNRQQVMESLDQAGWRLDALRLIVVTHQ</sequence>
<protein>
    <recommendedName>
        <fullName evidence="1">RNA polymerase-associated protein RapA</fullName>
        <ecNumber evidence="1">3.6.4.-</ecNumber>
    </recommendedName>
    <alternativeName>
        <fullName evidence="1">ATP-dependent helicase HepA</fullName>
    </alternativeName>
</protein>
<keyword id="KW-0010">Activator</keyword>
<keyword id="KW-0067">ATP-binding</keyword>
<keyword id="KW-0238">DNA-binding</keyword>
<keyword id="KW-0347">Helicase</keyword>
<keyword id="KW-0378">Hydrolase</keyword>
<keyword id="KW-0547">Nucleotide-binding</keyword>
<keyword id="KW-0804">Transcription</keyword>
<keyword id="KW-0805">Transcription regulation</keyword>
<dbReference type="EC" id="3.6.4.-" evidence="1"/>
<dbReference type="EMBL" id="CP000243">
    <property type="protein sequence ID" value="ABE05574.1"/>
    <property type="molecule type" value="Genomic_DNA"/>
</dbReference>
<dbReference type="RefSeq" id="WP_001117011.1">
    <property type="nucleotide sequence ID" value="NZ_CP064825.1"/>
</dbReference>
<dbReference type="SMR" id="Q1RGE0"/>
<dbReference type="GeneID" id="75202125"/>
<dbReference type="KEGG" id="eci:UTI89_C0064"/>
<dbReference type="HOGENOM" id="CLU_011520_0_0_6"/>
<dbReference type="Proteomes" id="UP000001952">
    <property type="component" value="Chromosome"/>
</dbReference>
<dbReference type="GO" id="GO:0005524">
    <property type="term" value="F:ATP binding"/>
    <property type="evidence" value="ECO:0007669"/>
    <property type="project" value="UniProtKB-UniRule"/>
</dbReference>
<dbReference type="GO" id="GO:0003677">
    <property type="term" value="F:DNA binding"/>
    <property type="evidence" value="ECO:0007669"/>
    <property type="project" value="UniProtKB-KW"/>
</dbReference>
<dbReference type="GO" id="GO:0004386">
    <property type="term" value="F:helicase activity"/>
    <property type="evidence" value="ECO:0007669"/>
    <property type="project" value="UniProtKB-UniRule"/>
</dbReference>
<dbReference type="GO" id="GO:0016817">
    <property type="term" value="F:hydrolase activity, acting on acid anhydrides"/>
    <property type="evidence" value="ECO:0007669"/>
    <property type="project" value="InterPro"/>
</dbReference>
<dbReference type="GO" id="GO:0006355">
    <property type="term" value="P:regulation of DNA-templated transcription"/>
    <property type="evidence" value="ECO:0007669"/>
    <property type="project" value="UniProtKB-UniRule"/>
</dbReference>
<dbReference type="CDD" id="cd18011">
    <property type="entry name" value="DEXDc_RapA"/>
    <property type="match status" value="1"/>
</dbReference>
<dbReference type="CDD" id="cd18793">
    <property type="entry name" value="SF2_C_SNF"/>
    <property type="match status" value="1"/>
</dbReference>
<dbReference type="FunFam" id="2.30.30.140:FF:000020">
    <property type="entry name" value="RNA polymerase-associated protein RapA"/>
    <property type="match status" value="1"/>
</dbReference>
<dbReference type="FunFam" id="2.30.30.930:FF:000001">
    <property type="entry name" value="RNA polymerase-associated protein RapA"/>
    <property type="match status" value="1"/>
</dbReference>
<dbReference type="FunFam" id="3.30.360.80:FF:000001">
    <property type="entry name" value="RNA polymerase-associated protein RapA"/>
    <property type="match status" value="1"/>
</dbReference>
<dbReference type="FunFam" id="3.40.50.10810:FF:000012">
    <property type="entry name" value="RNA polymerase-associated protein RapA"/>
    <property type="match status" value="1"/>
</dbReference>
<dbReference type="FunFam" id="3.40.50.300:FF:000350">
    <property type="entry name" value="RNA polymerase-associated protein RapA"/>
    <property type="match status" value="1"/>
</dbReference>
<dbReference type="Gene3D" id="2.30.30.140">
    <property type="match status" value="1"/>
</dbReference>
<dbReference type="Gene3D" id="2.30.30.930">
    <property type="match status" value="1"/>
</dbReference>
<dbReference type="Gene3D" id="3.30.360.80">
    <property type="match status" value="1"/>
</dbReference>
<dbReference type="Gene3D" id="6.10.140.1500">
    <property type="match status" value="1"/>
</dbReference>
<dbReference type="Gene3D" id="6.10.140.2230">
    <property type="match status" value="1"/>
</dbReference>
<dbReference type="Gene3D" id="3.40.50.300">
    <property type="entry name" value="P-loop containing nucleotide triphosphate hydrolases"/>
    <property type="match status" value="1"/>
</dbReference>
<dbReference type="Gene3D" id="3.40.50.10810">
    <property type="entry name" value="Tandem AAA-ATPase domain"/>
    <property type="match status" value="1"/>
</dbReference>
<dbReference type="HAMAP" id="MF_01821">
    <property type="entry name" value="Helicase_RapA"/>
    <property type="match status" value="1"/>
</dbReference>
<dbReference type="InterPro" id="IPR014001">
    <property type="entry name" value="Helicase_ATP-bd"/>
</dbReference>
<dbReference type="InterPro" id="IPR001650">
    <property type="entry name" value="Helicase_C-like"/>
</dbReference>
<dbReference type="InterPro" id="IPR023949">
    <property type="entry name" value="Helicase_RapA"/>
</dbReference>
<dbReference type="InterPro" id="IPR027417">
    <property type="entry name" value="P-loop_NTPase"/>
</dbReference>
<dbReference type="InterPro" id="IPR022737">
    <property type="entry name" value="RapA_C"/>
</dbReference>
<dbReference type="InterPro" id="IPR038718">
    <property type="entry name" value="SNF2-like_sf"/>
</dbReference>
<dbReference type="InterPro" id="IPR049730">
    <property type="entry name" value="SNF2/RAD54-like_C"/>
</dbReference>
<dbReference type="InterPro" id="IPR000330">
    <property type="entry name" value="SNF2_N"/>
</dbReference>
<dbReference type="InterPro" id="IPR040765">
    <property type="entry name" value="Tudor_1_RapA"/>
</dbReference>
<dbReference type="InterPro" id="IPR040766">
    <property type="entry name" value="Tudor_2_RapA"/>
</dbReference>
<dbReference type="NCBIfam" id="NF003426">
    <property type="entry name" value="PRK04914.1"/>
    <property type="match status" value="1"/>
</dbReference>
<dbReference type="PANTHER" id="PTHR45766">
    <property type="entry name" value="DNA ANNEALING HELICASE AND ENDONUCLEASE ZRANB3 FAMILY MEMBER"/>
    <property type="match status" value="1"/>
</dbReference>
<dbReference type="PANTHER" id="PTHR45766:SF6">
    <property type="entry name" value="SWI_SNF-RELATED MATRIX-ASSOCIATED ACTIN-DEPENDENT REGULATOR OF CHROMATIN SUBFAMILY A-LIKE PROTEIN 1"/>
    <property type="match status" value="1"/>
</dbReference>
<dbReference type="Pfam" id="PF00271">
    <property type="entry name" value="Helicase_C"/>
    <property type="match status" value="1"/>
</dbReference>
<dbReference type="Pfam" id="PF12137">
    <property type="entry name" value="RapA_C"/>
    <property type="match status" value="1"/>
</dbReference>
<dbReference type="Pfam" id="PF00176">
    <property type="entry name" value="SNF2-rel_dom"/>
    <property type="match status" value="1"/>
</dbReference>
<dbReference type="Pfam" id="PF18339">
    <property type="entry name" value="Tudor_1_RapA"/>
    <property type="match status" value="1"/>
</dbReference>
<dbReference type="Pfam" id="PF18337">
    <property type="entry name" value="Tudor_RapA"/>
    <property type="match status" value="1"/>
</dbReference>
<dbReference type="SMART" id="SM00487">
    <property type="entry name" value="DEXDc"/>
    <property type="match status" value="1"/>
</dbReference>
<dbReference type="SMART" id="SM00490">
    <property type="entry name" value="HELICc"/>
    <property type="match status" value="1"/>
</dbReference>
<dbReference type="SUPFAM" id="SSF52540">
    <property type="entry name" value="P-loop containing nucleoside triphosphate hydrolases"/>
    <property type="match status" value="2"/>
</dbReference>
<dbReference type="PROSITE" id="PS51192">
    <property type="entry name" value="HELICASE_ATP_BIND_1"/>
    <property type="match status" value="1"/>
</dbReference>
<dbReference type="PROSITE" id="PS51194">
    <property type="entry name" value="HELICASE_CTER"/>
    <property type="match status" value="1"/>
</dbReference>
<organism>
    <name type="scientific">Escherichia coli (strain UTI89 / UPEC)</name>
    <dbReference type="NCBI Taxonomy" id="364106"/>
    <lineage>
        <taxon>Bacteria</taxon>
        <taxon>Pseudomonadati</taxon>
        <taxon>Pseudomonadota</taxon>
        <taxon>Gammaproteobacteria</taxon>
        <taxon>Enterobacterales</taxon>
        <taxon>Enterobacteriaceae</taxon>
        <taxon>Escherichia</taxon>
    </lineage>
</organism>
<name>RAPA_ECOUT</name>
<reference key="1">
    <citation type="journal article" date="2006" name="Proc. Natl. Acad. Sci. U.S.A.">
        <title>Identification of genes subject to positive selection in uropathogenic strains of Escherichia coli: a comparative genomics approach.</title>
        <authorList>
            <person name="Chen S.L."/>
            <person name="Hung C.-S."/>
            <person name="Xu J."/>
            <person name="Reigstad C.S."/>
            <person name="Magrini V."/>
            <person name="Sabo A."/>
            <person name="Blasiar D."/>
            <person name="Bieri T."/>
            <person name="Meyer R.R."/>
            <person name="Ozersky P."/>
            <person name="Armstrong J.R."/>
            <person name="Fulton R.S."/>
            <person name="Latreille J.P."/>
            <person name="Spieth J."/>
            <person name="Hooton T.M."/>
            <person name="Mardis E.R."/>
            <person name="Hultgren S.J."/>
            <person name="Gordon J.I."/>
        </authorList>
    </citation>
    <scope>NUCLEOTIDE SEQUENCE [LARGE SCALE GENOMIC DNA]</scope>
    <source>
        <strain>UTI89 / UPEC</strain>
    </source>
</reference>
<evidence type="ECO:0000255" key="1">
    <source>
        <dbReference type="HAMAP-Rule" id="MF_01821"/>
    </source>
</evidence>
<proteinExistence type="inferred from homology"/>
<comment type="function">
    <text evidence="1">Transcription regulator that activates transcription by stimulating RNA polymerase (RNAP) recycling in case of stress conditions such as supercoiled DNA or high salt concentrations. Probably acts by releasing the RNAP, when it is trapped or immobilized on tightly supercoiled DNA. Does not activate transcription on linear DNA. Probably not involved in DNA repair.</text>
</comment>
<comment type="subunit">
    <text evidence="1">Interacts with the RNAP. Has a higher affinity for the core RNAP than for the holoenzyme. Its ATPase activity is stimulated by binding to RNAP.</text>
</comment>
<comment type="similarity">
    <text evidence="1">Belongs to the SNF2/RAD54 helicase family. RapA subfamily.</text>
</comment>
<feature type="chain" id="PRO_1000088356" description="RNA polymerase-associated protein RapA">
    <location>
        <begin position="1"/>
        <end position="968"/>
    </location>
</feature>
<feature type="domain" description="Helicase ATP-binding" evidence="1">
    <location>
        <begin position="164"/>
        <end position="334"/>
    </location>
</feature>
<feature type="domain" description="Helicase C-terminal" evidence="1">
    <location>
        <begin position="490"/>
        <end position="662"/>
    </location>
</feature>
<feature type="short sequence motif" description="DEAH box">
    <location>
        <begin position="280"/>
        <end position="283"/>
    </location>
</feature>
<feature type="binding site" evidence="1">
    <location>
        <begin position="177"/>
        <end position="184"/>
    </location>
    <ligand>
        <name>ATP</name>
        <dbReference type="ChEBI" id="CHEBI:30616"/>
    </ligand>
</feature>